<proteinExistence type="inferred from homology"/>
<reference key="1">
    <citation type="journal article" date="2004" name="Science">
        <title>A predator unmasked: life cycle of Bdellovibrio bacteriovorus from a genomic perspective.</title>
        <authorList>
            <person name="Rendulic S."/>
            <person name="Jagtap P."/>
            <person name="Rosinus A."/>
            <person name="Eppinger M."/>
            <person name="Baar C."/>
            <person name="Lanz C."/>
            <person name="Keller H."/>
            <person name="Lambert C."/>
            <person name="Evans K.J."/>
            <person name="Goesmann A."/>
            <person name="Meyer F."/>
            <person name="Sockett R.E."/>
            <person name="Schuster S.C."/>
        </authorList>
    </citation>
    <scope>NUCLEOTIDE SEQUENCE [LARGE SCALE GENOMIC DNA]</scope>
    <source>
        <strain>ATCC 15356 / DSM 50701 / NCIMB 9529 / HD100</strain>
    </source>
</reference>
<keyword id="KW-0997">Cell inner membrane</keyword>
<keyword id="KW-1003">Cell membrane</keyword>
<keyword id="KW-0406">Ion transport</keyword>
<keyword id="KW-0472">Membrane</keyword>
<keyword id="KW-0630">Potassium</keyword>
<keyword id="KW-0633">Potassium transport</keyword>
<keyword id="KW-1185">Reference proteome</keyword>
<keyword id="KW-0769">Symport</keyword>
<keyword id="KW-0812">Transmembrane</keyword>
<keyword id="KW-1133">Transmembrane helix</keyword>
<keyword id="KW-0813">Transport</keyword>
<name>KUP_BDEBA</name>
<organism>
    <name type="scientific">Bdellovibrio bacteriovorus (strain ATCC 15356 / DSM 50701 / NCIMB 9529 / HD100)</name>
    <dbReference type="NCBI Taxonomy" id="264462"/>
    <lineage>
        <taxon>Bacteria</taxon>
        <taxon>Pseudomonadati</taxon>
        <taxon>Bdellovibrionota</taxon>
        <taxon>Bdellovibrionia</taxon>
        <taxon>Bdellovibrionales</taxon>
        <taxon>Pseudobdellovibrionaceae</taxon>
        <taxon>Bdellovibrio</taxon>
    </lineage>
</organism>
<comment type="function">
    <text evidence="1">Transport of potassium into the cell. Likely operates as a K(+):H(+) symporter.</text>
</comment>
<comment type="catalytic activity">
    <reaction evidence="1">
        <text>K(+)(in) + H(+)(in) = K(+)(out) + H(+)(out)</text>
        <dbReference type="Rhea" id="RHEA:28490"/>
        <dbReference type="ChEBI" id="CHEBI:15378"/>
        <dbReference type="ChEBI" id="CHEBI:29103"/>
    </reaction>
    <physiologicalReaction direction="right-to-left" evidence="1">
        <dbReference type="Rhea" id="RHEA:28492"/>
    </physiologicalReaction>
</comment>
<comment type="subcellular location">
    <subcellularLocation>
        <location evidence="1">Cell inner membrane</location>
        <topology evidence="1">Multi-pass membrane protein</topology>
    </subcellularLocation>
</comment>
<comment type="similarity">
    <text evidence="1">Belongs to the HAK/KUP transporter (TC 2.A.72) family.</text>
</comment>
<gene>
    <name evidence="1" type="primary">kup</name>
    <name type="ordered locus">Bd1998</name>
</gene>
<accession>Q6MLL0</accession>
<sequence length="669" mass="74254">MWARCVNLAWGLLTSRMNLTRLKPCFDNLDGVFGIENSGHHKNSSNVLMLALGALGVVFGDIGTSPLYALKECFGHYGLAPTPENVIGILSLIFWTLVLAICIKYMAFVLRADNKGEGGILSLMALAVRSQQSKDVSRRRWTMTIIGLFGAALLYGDGIITPAISVLSAMEGLTLVAPQFSPYIIPLTIFVMNALFLMQKYGTARIGVIFGPILLIWFTVLGLLGIRGMAKNLHVFEALLPHHGIEFLMNNGMAGFLVLGSVFLVVTGGEALYADMGHFGKRPIRLAWFFVALPALVLNYFGQGALLLNNPEAVSNPFYMLAPKWALLPMVMLSTMATVIASQALITGVFSITRQAIQLGFCPRVNIIHTSSQEIGQIYIPIVNWSMFIGVIWLVLTFKTSSNLAAAYGIAVTGATMITTILAFEVARQKWKWSLLKSSAIFGSFLVMDLAFFGANVHKIPHGGWVPLVIGAIIYLLMTTWQKGRQILFRRLKERSMPIEDFCQKLLREPPLRAPGTAIYMAGDPWGVPAPLLHNMKHNKVLHQRVAILTIQTKEVPFVSKRDRISIQEVIPNIYRIIANYGFMEIPKMKHILEACRQRDINFNVNETTFVLGRETIIAEKGPNRPGEAGMAHWRERLFAIMSKNAQRPTAFFRIPPNQVIEVGIQVEI</sequence>
<evidence type="ECO:0000255" key="1">
    <source>
        <dbReference type="HAMAP-Rule" id="MF_01522"/>
    </source>
</evidence>
<feature type="chain" id="PRO_0000208992" description="Probable potassium transport system protein Kup">
    <location>
        <begin position="1"/>
        <end position="669"/>
    </location>
</feature>
<feature type="transmembrane region" description="Helical" evidence="1">
    <location>
        <begin position="47"/>
        <end position="67"/>
    </location>
</feature>
<feature type="transmembrane region" description="Helical" evidence="1">
    <location>
        <begin position="86"/>
        <end position="106"/>
    </location>
</feature>
<feature type="transmembrane region" description="Helical" evidence="1">
    <location>
        <begin position="144"/>
        <end position="164"/>
    </location>
</feature>
<feature type="transmembrane region" description="Helical" evidence="1">
    <location>
        <begin position="172"/>
        <end position="192"/>
    </location>
</feature>
<feature type="transmembrane region" description="Helical" evidence="1">
    <location>
        <begin position="206"/>
        <end position="226"/>
    </location>
</feature>
<feature type="transmembrane region" description="Helical" evidence="1">
    <location>
        <begin position="252"/>
        <end position="272"/>
    </location>
</feature>
<feature type="transmembrane region" description="Helical" evidence="1">
    <location>
        <begin position="288"/>
        <end position="308"/>
    </location>
</feature>
<feature type="transmembrane region" description="Helical" evidence="1">
    <location>
        <begin position="326"/>
        <end position="346"/>
    </location>
</feature>
<feature type="transmembrane region" description="Helical" evidence="1">
    <location>
        <begin position="378"/>
        <end position="398"/>
    </location>
</feature>
<feature type="transmembrane region" description="Helical" evidence="1">
    <location>
        <begin position="404"/>
        <end position="424"/>
    </location>
</feature>
<feature type="transmembrane region" description="Helical" evidence="1">
    <location>
        <begin position="435"/>
        <end position="455"/>
    </location>
</feature>
<feature type="transmembrane region" description="Helical" evidence="1">
    <location>
        <begin position="460"/>
        <end position="480"/>
    </location>
</feature>
<dbReference type="EMBL" id="BX842651">
    <property type="protein sequence ID" value="CAE79847.1"/>
    <property type="molecule type" value="Genomic_DNA"/>
</dbReference>
<dbReference type="STRING" id="264462.Bd1998"/>
<dbReference type="KEGG" id="bba:Bd1998"/>
<dbReference type="eggNOG" id="COG3158">
    <property type="taxonomic scope" value="Bacteria"/>
</dbReference>
<dbReference type="HOGENOM" id="CLU_008142_4_2_7"/>
<dbReference type="Proteomes" id="UP000008080">
    <property type="component" value="Chromosome"/>
</dbReference>
<dbReference type="GO" id="GO:0005886">
    <property type="term" value="C:plasma membrane"/>
    <property type="evidence" value="ECO:0007669"/>
    <property type="project" value="UniProtKB-SubCell"/>
</dbReference>
<dbReference type="GO" id="GO:0015079">
    <property type="term" value="F:potassium ion transmembrane transporter activity"/>
    <property type="evidence" value="ECO:0007669"/>
    <property type="project" value="UniProtKB-UniRule"/>
</dbReference>
<dbReference type="GO" id="GO:0015293">
    <property type="term" value="F:symporter activity"/>
    <property type="evidence" value="ECO:0007669"/>
    <property type="project" value="UniProtKB-UniRule"/>
</dbReference>
<dbReference type="HAMAP" id="MF_01522">
    <property type="entry name" value="Kup"/>
    <property type="match status" value="1"/>
</dbReference>
<dbReference type="InterPro" id="IPR003855">
    <property type="entry name" value="K+_transporter"/>
</dbReference>
<dbReference type="InterPro" id="IPR053952">
    <property type="entry name" value="K_trans_C"/>
</dbReference>
<dbReference type="InterPro" id="IPR053951">
    <property type="entry name" value="K_trans_N"/>
</dbReference>
<dbReference type="InterPro" id="IPR023051">
    <property type="entry name" value="Kup"/>
</dbReference>
<dbReference type="PANTHER" id="PTHR30540:SF79">
    <property type="entry name" value="LOW AFFINITY POTASSIUM TRANSPORT SYSTEM PROTEIN KUP"/>
    <property type="match status" value="1"/>
</dbReference>
<dbReference type="PANTHER" id="PTHR30540">
    <property type="entry name" value="OSMOTIC STRESS POTASSIUM TRANSPORTER"/>
    <property type="match status" value="1"/>
</dbReference>
<dbReference type="Pfam" id="PF02705">
    <property type="entry name" value="K_trans"/>
    <property type="match status" value="1"/>
</dbReference>
<dbReference type="Pfam" id="PF22776">
    <property type="entry name" value="K_trans_C"/>
    <property type="match status" value="1"/>
</dbReference>
<protein>
    <recommendedName>
        <fullName evidence="1">Probable potassium transport system protein Kup</fullName>
    </recommendedName>
</protein>